<comment type="catalytic activity">
    <reaction evidence="1">
        <text>1-(2-carboxyphenylamino)-1-deoxy-D-ribulose 5-phosphate + H(+) = (1S,2R)-1-C-(indol-3-yl)glycerol 3-phosphate + CO2 + H2O</text>
        <dbReference type="Rhea" id="RHEA:23476"/>
        <dbReference type="ChEBI" id="CHEBI:15377"/>
        <dbReference type="ChEBI" id="CHEBI:15378"/>
        <dbReference type="ChEBI" id="CHEBI:16526"/>
        <dbReference type="ChEBI" id="CHEBI:58613"/>
        <dbReference type="ChEBI" id="CHEBI:58866"/>
        <dbReference type="EC" id="4.1.1.48"/>
    </reaction>
</comment>
<comment type="pathway">
    <text evidence="1">Amino-acid biosynthesis; L-tryptophan biosynthesis; L-tryptophan from chorismate: step 4/5.</text>
</comment>
<comment type="similarity">
    <text evidence="1">Belongs to the TrpC family.</text>
</comment>
<protein>
    <recommendedName>
        <fullName evidence="1">Indole-3-glycerol phosphate synthase</fullName>
        <shortName evidence="1">IGPS</shortName>
        <ecNumber evidence="1">4.1.1.48</ecNumber>
    </recommendedName>
</protein>
<organism>
    <name type="scientific">Polynucleobacter necessarius subsp. necessarius (strain STIR1)</name>
    <dbReference type="NCBI Taxonomy" id="452638"/>
    <lineage>
        <taxon>Bacteria</taxon>
        <taxon>Pseudomonadati</taxon>
        <taxon>Pseudomonadota</taxon>
        <taxon>Betaproteobacteria</taxon>
        <taxon>Burkholderiales</taxon>
        <taxon>Burkholderiaceae</taxon>
        <taxon>Polynucleobacter</taxon>
    </lineage>
</organism>
<reference key="1">
    <citation type="journal article" date="2013" name="Proc. Natl. Acad. Sci. U.S.A.">
        <title>Polynucleobacter necessarius, a model for genome reduction in both free-living and symbiotic bacteria.</title>
        <authorList>
            <person name="Boscaro V."/>
            <person name="Felletti M."/>
            <person name="Vannini C."/>
            <person name="Ackerman M.S."/>
            <person name="Chain P.S."/>
            <person name="Malfatti S."/>
            <person name="Vergez L.M."/>
            <person name="Shin M."/>
            <person name="Doak T.G."/>
            <person name="Lynch M."/>
            <person name="Petroni G."/>
        </authorList>
    </citation>
    <scope>NUCLEOTIDE SEQUENCE [LARGE SCALE GENOMIC DNA]</scope>
    <source>
        <strain>STIR1</strain>
    </source>
</reference>
<accession>B1XSZ1</accession>
<feature type="chain" id="PRO_1000095879" description="Indole-3-glycerol phosphate synthase">
    <location>
        <begin position="1"/>
        <end position="267"/>
    </location>
</feature>
<sequence length="267" mass="29304">MSNILNKIVATKKIEVANRLKQVSLANQRAQAEANNQDVLLKPRGFIQAIEKKITAGKAAVITEIKKASPSRGILRELFVPTDIAQSYEKHGAACLSVLTDADYFQGCNDYLQQARAACSIPVLRKDFTIDPYQVYEARAIGADAILLIVAYLELNQMKDLEACANELGLDVLVEVHNASELEQALELKTPLLGINNRNLKTFEVTLQNTLSLLSMVPNDKTLVTESGILSHTDVQLMRDHHVNAFLVGEAFMRAADPGAALSELFS</sequence>
<proteinExistence type="inferred from homology"/>
<keyword id="KW-0028">Amino-acid biosynthesis</keyword>
<keyword id="KW-0057">Aromatic amino acid biosynthesis</keyword>
<keyword id="KW-0210">Decarboxylase</keyword>
<keyword id="KW-0456">Lyase</keyword>
<keyword id="KW-0822">Tryptophan biosynthesis</keyword>
<gene>
    <name evidence="1" type="primary">trpC</name>
    <name type="ordered locus">Pnec_0159</name>
</gene>
<evidence type="ECO:0000255" key="1">
    <source>
        <dbReference type="HAMAP-Rule" id="MF_00134"/>
    </source>
</evidence>
<name>TRPC_POLNS</name>
<dbReference type="EC" id="4.1.1.48" evidence="1"/>
<dbReference type="EMBL" id="CP001010">
    <property type="protein sequence ID" value="ACB43468.1"/>
    <property type="molecule type" value="Genomic_DNA"/>
</dbReference>
<dbReference type="SMR" id="B1XSZ1"/>
<dbReference type="STRING" id="452638.Pnec_0159"/>
<dbReference type="KEGG" id="pne:Pnec_0159"/>
<dbReference type="eggNOG" id="COG0134">
    <property type="taxonomic scope" value="Bacteria"/>
</dbReference>
<dbReference type="HOGENOM" id="CLU_034247_2_0_4"/>
<dbReference type="OrthoDB" id="9804217at2"/>
<dbReference type="UniPathway" id="UPA00035">
    <property type="reaction ID" value="UER00043"/>
</dbReference>
<dbReference type="GO" id="GO:0004425">
    <property type="term" value="F:indole-3-glycerol-phosphate synthase activity"/>
    <property type="evidence" value="ECO:0007669"/>
    <property type="project" value="UniProtKB-UniRule"/>
</dbReference>
<dbReference type="GO" id="GO:0004640">
    <property type="term" value="F:phosphoribosylanthranilate isomerase activity"/>
    <property type="evidence" value="ECO:0007669"/>
    <property type="project" value="TreeGrafter"/>
</dbReference>
<dbReference type="GO" id="GO:0000162">
    <property type="term" value="P:L-tryptophan biosynthetic process"/>
    <property type="evidence" value="ECO:0007669"/>
    <property type="project" value="UniProtKB-UniRule"/>
</dbReference>
<dbReference type="CDD" id="cd00331">
    <property type="entry name" value="IGPS"/>
    <property type="match status" value="1"/>
</dbReference>
<dbReference type="FunFam" id="3.20.20.70:FF:000024">
    <property type="entry name" value="Indole-3-glycerol phosphate synthase"/>
    <property type="match status" value="1"/>
</dbReference>
<dbReference type="Gene3D" id="3.20.20.70">
    <property type="entry name" value="Aldolase class I"/>
    <property type="match status" value="1"/>
</dbReference>
<dbReference type="HAMAP" id="MF_00134_B">
    <property type="entry name" value="IGPS_B"/>
    <property type="match status" value="1"/>
</dbReference>
<dbReference type="InterPro" id="IPR013785">
    <property type="entry name" value="Aldolase_TIM"/>
</dbReference>
<dbReference type="InterPro" id="IPR045186">
    <property type="entry name" value="Indole-3-glycerol_P_synth"/>
</dbReference>
<dbReference type="InterPro" id="IPR013798">
    <property type="entry name" value="Indole-3-glycerol_P_synth_dom"/>
</dbReference>
<dbReference type="InterPro" id="IPR001468">
    <property type="entry name" value="Indole-3-GlycerolPSynthase_CS"/>
</dbReference>
<dbReference type="InterPro" id="IPR011060">
    <property type="entry name" value="RibuloseP-bd_barrel"/>
</dbReference>
<dbReference type="NCBIfam" id="NF001373">
    <property type="entry name" value="PRK00278.1-6"/>
    <property type="match status" value="1"/>
</dbReference>
<dbReference type="NCBIfam" id="NF001377">
    <property type="entry name" value="PRK00278.2-4"/>
    <property type="match status" value="1"/>
</dbReference>
<dbReference type="PANTHER" id="PTHR22854:SF2">
    <property type="entry name" value="INDOLE-3-GLYCEROL-PHOSPHATE SYNTHASE"/>
    <property type="match status" value="1"/>
</dbReference>
<dbReference type="PANTHER" id="PTHR22854">
    <property type="entry name" value="TRYPTOPHAN BIOSYNTHESIS PROTEIN"/>
    <property type="match status" value="1"/>
</dbReference>
<dbReference type="Pfam" id="PF00218">
    <property type="entry name" value="IGPS"/>
    <property type="match status" value="1"/>
</dbReference>
<dbReference type="SUPFAM" id="SSF51366">
    <property type="entry name" value="Ribulose-phoshate binding barrel"/>
    <property type="match status" value="1"/>
</dbReference>
<dbReference type="PROSITE" id="PS00614">
    <property type="entry name" value="IGPS"/>
    <property type="match status" value="1"/>
</dbReference>